<reference key="1">
    <citation type="journal article" date="2003" name="Science">
        <title>Role of mobile DNA in the evolution of vancomycin-resistant Enterococcus faecalis.</title>
        <authorList>
            <person name="Paulsen I.T."/>
            <person name="Banerjei L."/>
            <person name="Myers G.S.A."/>
            <person name="Nelson K.E."/>
            <person name="Seshadri R."/>
            <person name="Read T.D."/>
            <person name="Fouts D.E."/>
            <person name="Eisen J.A."/>
            <person name="Gill S.R."/>
            <person name="Heidelberg J.F."/>
            <person name="Tettelin H."/>
            <person name="Dodson R.J."/>
            <person name="Umayam L.A."/>
            <person name="Brinkac L.M."/>
            <person name="Beanan M.J."/>
            <person name="Daugherty S.C."/>
            <person name="DeBoy R.T."/>
            <person name="Durkin S.A."/>
            <person name="Kolonay J.F."/>
            <person name="Madupu R."/>
            <person name="Nelson W.C."/>
            <person name="Vamathevan J.J."/>
            <person name="Tran B."/>
            <person name="Upton J."/>
            <person name="Hansen T."/>
            <person name="Shetty J."/>
            <person name="Khouri H.M."/>
            <person name="Utterback T.R."/>
            <person name="Radune D."/>
            <person name="Ketchum K.A."/>
            <person name="Dougherty B.A."/>
            <person name="Fraser C.M."/>
        </authorList>
    </citation>
    <scope>NUCLEOTIDE SEQUENCE [LARGE SCALE GENOMIC DNA]</scope>
    <source>
        <strain>ATCC 700802 / V583</strain>
    </source>
</reference>
<evidence type="ECO:0000255" key="1">
    <source>
        <dbReference type="HAMAP-Rule" id="MF_01535"/>
    </source>
</evidence>
<feature type="chain" id="PRO_0000090534" description="Rhamnulokinase">
    <location>
        <begin position="1"/>
        <end position="494"/>
    </location>
</feature>
<feature type="active site" description="Proton acceptor" evidence="1">
    <location>
        <position position="243"/>
    </location>
</feature>
<feature type="binding site" evidence="1">
    <location>
        <begin position="18"/>
        <end position="22"/>
    </location>
    <ligand>
        <name>ATP</name>
        <dbReference type="ChEBI" id="CHEBI:30616"/>
    </ligand>
</feature>
<feature type="binding site" evidence="1">
    <location>
        <position position="87"/>
    </location>
    <ligand>
        <name>substrate</name>
    </ligand>
</feature>
<feature type="binding site" evidence="1">
    <location>
        <begin position="242"/>
        <end position="244"/>
    </location>
    <ligand>
        <name>substrate</name>
    </ligand>
</feature>
<feature type="binding site" evidence="1">
    <location>
        <position position="265"/>
    </location>
    <ligand>
        <name>ATP</name>
        <dbReference type="ChEBI" id="CHEBI:30616"/>
    </ligand>
</feature>
<feature type="binding site" evidence="1">
    <location>
        <position position="302"/>
    </location>
    <ligand>
        <name>substrate</name>
    </ligand>
</feature>
<feature type="binding site" evidence="1">
    <location>
        <position position="310"/>
    </location>
    <ligand>
        <name>ATP</name>
        <dbReference type="ChEBI" id="CHEBI:30616"/>
    </ligand>
</feature>
<feature type="binding site" evidence="1">
    <location>
        <position position="411"/>
    </location>
    <ligand>
        <name>ATP</name>
        <dbReference type="ChEBI" id="CHEBI:30616"/>
    </ligand>
</feature>
<feature type="disulfide bond" evidence="1">
    <location>
        <begin position="360"/>
        <end position="377"/>
    </location>
</feature>
<comment type="function">
    <text evidence="1">Involved in the catabolism of L-rhamnose (6-deoxy-L-mannose). Catalyzes the transfer of the gamma-phosphate group from ATP to the 1-hydroxyl group of L-rhamnulose to yield L-rhamnulose 1-phosphate.</text>
</comment>
<comment type="catalytic activity">
    <reaction evidence="1">
        <text>L-rhamnulose + ATP = L-rhamnulose 1-phosphate + ADP + H(+)</text>
        <dbReference type="Rhea" id="RHEA:20117"/>
        <dbReference type="ChEBI" id="CHEBI:15378"/>
        <dbReference type="ChEBI" id="CHEBI:17897"/>
        <dbReference type="ChEBI" id="CHEBI:30616"/>
        <dbReference type="ChEBI" id="CHEBI:58313"/>
        <dbReference type="ChEBI" id="CHEBI:456216"/>
        <dbReference type="EC" id="2.7.1.5"/>
    </reaction>
</comment>
<comment type="cofactor">
    <cofactor evidence="1">
        <name>Mg(2+)</name>
        <dbReference type="ChEBI" id="CHEBI:18420"/>
    </cofactor>
</comment>
<comment type="pathway">
    <text evidence="1">Carbohydrate degradation; L-rhamnose degradation; glycerone phosphate from L-rhamnose: step 2/3.</text>
</comment>
<comment type="similarity">
    <text evidence="1">Belongs to the rhamnulokinase family.</text>
</comment>
<protein>
    <recommendedName>
        <fullName evidence="1">Rhamnulokinase</fullName>
        <shortName evidence="1">RhaB</shortName>
        <ecNumber evidence="1">2.7.1.5</ecNumber>
    </recommendedName>
    <alternativeName>
        <fullName evidence="1">ATP:L-rhamnulose phosphotransferase</fullName>
    </alternativeName>
    <alternativeName>
        <fullName evidence="1">L-rhamnulose 1-kinase</fullName>
    </alternativeName>
    <alternativeName>
        <fullName evidence="1">Rhamnulose kinase</fullName>
    </alternativeName>
</protein>
<accession>Q838L3</accession>
<organism>
    <name type="scientific">Enterococcus faecalis (strain ATCC 700802 / V583)</name>
    <dbReference type="NCBI Taxonomy" id="226185"/>
    <lineage>
        <taxon>Bacteria</taxon>
        <taxon>Bacillati</taxon>
        <taxon>Bacillota</taxon>
        <taxon>Bacilli</taxon>
        <taxon>Lactobacillales</taxon>
        <taxon>Enterococcaceae</taxon>
        <taxon>Enterococcus</taxon>
    </lineage>
</organism>
<dbReference type="EC" id="2.7.1.5" evidence="1"/>
<dbReference type="EMBL" id="AE016830">
    <property type="protein sequence ID" value="AAO80289.1"/>
    <property type="molecule type" value="Genomic_DNA"/>
</dbReference>
<dbReference type="RefSeq" id="NP_814218.1">
    <property type="nucleotide sequence ID" value="NC_004668.1"/>
</dbReference>
<dbReference type="SMR" id="Q838L3"/>
<dbReference type="STRING" id="226185.EF_0433"/>
<dbReference type="EnsemblBacteria" id="AAO80289">
    <property type="protein sequence ID" value="AAO80289"/>
    <property type="gene ID" value="EF_0433"/>
</dbReference>
<dbReference type="KEGG" id="efa:EF0433"/>
<dbReference type="PATRIC" id="fig|226185.45.peg.2900"/>
<dbReference type="eggNOG" id="COG1070">
    <property type="taxonomic scope" value="Bacteria"/>
</dbReference>
<dbReference type="HOGENOM" id="CLU_039395_0_1_9"/>
<dbReference type="UniPathway" id="UPA00541">
    <property type="reaction ID" value="UER00602"/>
</dbReference>
<dbReference type="Proteomes" id="UP000001415">
    <property type="component" value="Chromosome"/>
</dbReference>
<dbReference type="GO" id="GO:0005829">
    <property type="term" value="C:cytosol"/>
    <property type="evidence" value="ECO:0007669"/>
    <property type="project" value="TreeGrafter"/>
</dbReference>
<dbReference type="GO" id="GO:0005524">
    <property type="term" value="F:ATP binding"/>
    <property type="evidence" value="ECO:0007669"/>
    <property type="project" value="UniProtKB-KW"/>
</dbReference>
<dbReference type="GO" id="GO:0004370">
    <property type="term" value="F:glycerol kinase activity"/>
    <property type="evidence" value="ECO:0007669"/>
    <property type="project" value="TreeGrafter"/>
</dbReference>
<dbReference type="GO" id="GO:0008993">
    <property type="term" value="F:rhamnulokinase activity"/>
    <property type="evidence" value="ECO:0007669"/>
    <property type="project" value="UniProtKB-UniRule"/>
</dbReference>
<dbReference type="GO" id="GO:0006071">
    <property type="term" value="P:glycerol metabolic process"/>
    <property type="evidence" value="ECO:0007669"/>
    <property type="project" value="TreeGrafter"/>
</dbReference>
<dbReference type="GO" id="GO:0019301">
    <property type="term" value="P:rhamnose catabolic process"/>
    <property type="evidence" value="ECO:0007669"/>
    <property type="project" value="UniProtKB-UniRule"/>
</dbReference>
<dbReference type="CDD" id="cd07771">
    <property type="entry name" value="ASKHA_NBD_FGGY_RhaB-like"/>
    <property type="match status" value="1"/>
</dbReference>
<dbReference type="Gene3D" id="3.30.420.40">
    <property type="match status" value="2"/>
</dbReference>
<dbReference type="HAMAP" id="MF_01535">
    <property type="entry name" value="Rhamnulokinase"/>
    <property type="match status" value="1"/>
</dbReference>
<dbReference type="InterPro" id="IPR043129">
    <property type="entry name" value="ATPase_NBD"/>
</dbReference>
<dbReference type="InterPro" id="IPR000577">
    <property type="entry name" value="Carb_kinase_FGGY"/>
</dbReference>
<dbReference type="InterPro" id="IPR018485">
    <property type="entry name" value="FGGY_C"/>
</dbReference>
<dbReference type="InterPro" id="IPR018484">
    <property type="entry name" value="FGGY_N"/>
</dbReference>
<dbReference type="InterPro" id="IPR013449">
    <property type="entry name" value="Rhamnulokinase"/>
</dbReference>
<dbReference type="NCBIfam" id="TIGR02627">
    <property type="entry name" value="rhamnulo_kin"/>
    <property type="match status" value="1"/>
</dbReference>
<dbReference type="PANTHER" id="PTHR10196:SF93">
    <property type="entry name" value="L-RHAMNULOKINASE"/>
    <property type="match status" value="1"/>
</dbReference>
<dbReference type="PANTHER" id="PTHR10196">
    <property type="entry name" value="SUGAR KINASE"/>
    <property type="match status" value="1"/>
</dbReference>
<dbReference type="Pfam" id="PF02782">
    <property type="entry name" value="FGGY_C"/>
    <property type="match status" value="1"/>
</dbReference>
<dbReference type="Pfam" id="PF00370">
    <property type="entry name" value="FGGY_N"/>
    <property type="match status" value="1"/>
</dbReference>
<dbReference type="PIRSF" id="PIRSF000538">
    <property type="entry name" value="GlpK"/>
    <property type="match status" value="1"/>
</dbReference>
<dbReference type="SUPFAM" id="SSF53067">
    <property type="entry name" value="Actin-like ATPase domain"/>
    <property type="match status" value="2"/>
</dbReference>
<gene>
    <name evidence="1" type="primary">rhaB</name>
    <name type="ordered locus">EF_0433</name>
</gene>
<proteinExistence type="inferred from homology"/>
<name>RHAB_ENTFA</name>
<keyword id="KW-0067">ATP-binding</keyword>
<keyword id="KW-1015">Disulfide bond</keyword>
<keyword id="KW-0418">Kinase</keyword>
<keyword id="KW-0460">Magnesium</keyword>
<keyword id="KW-0547">Nucleotide-binding</keyword>
<keyword id="KW-1185">Reference proteome</keyword>
<keyword id="KW-0684">Rhamnose metabolism</keyword>
<keyword id="KW-0808">Transferase</keyword>
<sequence length="494" mass="54916">MKKEQVEKRTYLAVDIGASSGRIMKSQRLANGQITIEEIHRFKNGFHQKDGYQRWDMASLVHELLLGLQKVKQLGIKECFIGIDTWGVDYCLLDQSGQLLDEPIAYRDGRTEAAVTNFSKGYSLEKLYQQTGIQVQPFNTIFQLFVEEKERLAAASQLLLIPDYLGYVFTGKAVIEATNASTTQLLNAGTKQWESELLDFLGIDETLFPTLVEPGTILGDLQTAAFPDYDLPNATLITIASHDTASAILGTPGIGDDWAYISSGTWSLLGIETTVTTISAEAFQENYTNEWGAQNTIRFLKNIMGMWLIQEVARHQNYQYSYAELAALAEKEPAFQQFIDVNDPRFLNPGNMITELQAYCRETQQTVPESPGELARCIYDNLALCYSVELEKLAQLTGIERKITTLHVVGGGSNNRLLNQLTADVANVTVNAGPGEAIALGNLLMQMIATGELKDIPAARTCIQTSFPTEIYQANPIDSTIKNRYQAFMKRSSL</sequence>